<name>Y1956_STAAR</name>
<gene>
    <name type="ordered locus">SAR1956</name>
</gene>
<organism>
    <name type="scientific">Staphylococcus aureus (strain MRSA252)</name>
    <dbReference type="NCBI Taxonomy" id="282458"/>
    <lineage>
        <taxon>Bacteria</taxon>
        <taxon>Bacillati</taxon>
        <taxon>Bacillota</taxon>
        <taxon>Bacilli</taxon>
        <taxon>Bacillales</taxon>
        <taxon>Staphylococcaceae</taxon>
        <taxon>Staphylococcus</taxon>
    </lineage>
</organism>
<proteinExistence type="inferred from homology"/>
<comment type="function">
    <text evidence="1">May be involved in multidrug export. Transmembrane domains (TMD) form a pore in the cell membrane and the ATP-binding domain (NBD) is responsible for energy generation (By similarity).</text>
</comment>
<comment type="subunit">
    <text evidence="1">Homodimer.</text>
</comment>
<comment type="subcellular location">
    <subcellularLocation>
        <location evidence="1">Cell membrane</location>
        <topology evidence="4">Multi-pass membrane protein</topology>
    </subcellularLocation>
</comment>
<comment type="domain">
    <text>The ATP-binding domain (NBD) and the transmembrane domain (TMD) are fused.</text>
</comment>
<comment type="similarity">
    <text evidence="5">Belongs to the ABC transporter superfamily.</text>
</comment>
<protein>
    <recommendedName>
        <fullName>Putative multidrug export ATP-binding/permease protein SAR1956</fullName>
        <ecNumber>7.6.2.-</ecNumber>
    </recommendedName>
</protein>
<dbReference type="EC" id="7.6.2.-"/>
<dbReference type="EMBL" id="BX571856">
    <property type="protein sequence ID" value="CAG40943.1"/>
    <property type="molecule type" value="Genomic_DNA"/>
</dbReference>
<dbReference type="RefSeq" id="WP_000597238.1">
    <property type="nucleotide sequence ID" value="NC_002952.2"/>
</dbReference>
<dbReference type="SMR" id="Q6GFJ1"/>
<dbReference type="KEGG" id="sar:SAR1956"/>
<dbReference type="HOGENOM" id="CLU_000604_84_3_9"/>
<dbReference type="Proteomes" id="UP000000596">
    <property type="component" value="Chromosome"/>
</dbReference>
<dbReference type="GO" id="GO:0005886">
    <property type="term" value="C:plasma membrane"/>
    <property type="evidence" value="ECO:0007669"/>
    <property type="project" value="UniProtKB-SubCell"/>
</dbReference>
<dbReference type="GO" id="GO:0015421">
    <property type="term" value="F:ABC-type oligopeptide transporter activity"/>
    <property type="evidence" value="ECO:0007669"/>
    <property type="project" value="TreeGrafter"/>
</dbReference>
<dbReference type="GO" id="GO:0005524">
    <property type="term" value="F:ATP binding"/>
    <property type="evidence" value="ECO:0007669"/>
    <property type="project" value="UniProtKB-KW"/>
</dbReference>
<dbReference type="GO" id="GO:0016887">
    <property type="term" value="F:ATP hydrolysis activity"/>
    <property type="evidence" value="ECO:0007669"/>
    <property type="project" value="InterPro"/>
</dbReference>
<dbReference type="CDD" id="cd18554">
    <property type="entry name" value="ABC_6TM_Sav1866_like"/>
    <property type="match status" value="1"/>
</dbReference>
<dbReference type="CDD" id="cd03251">
    <property type="entry name" value="ABCC_MsbA"/>
    <property type="match status" value="1"/>
</dbReference>
<dbReference type="FunFam" id="1.20.1560.10:FF:000069">
    <property type="entry name" value="Multidrug ABC transporter ATP-binding protein"/>
    <property type="match status" value="1"/>
</dbReference>
<dbReference type="FunFam" id="3.40.50.300:FF:000218">
    <property type="entry name" value="Multidrug ABC transporter ATP-binding protein"/>
    <property type="match status" value="1"/>
</dbReference>
<dbReference type="Gene3D" id="1.20.1560.10">
    <property type="entry name" value="ABC transporter type 1, transmembrane domain"/>
    <property type="match status" value="1"/>
</dbReference>
<dbReference type="Gene3D" id="3.40.50.300">
    <property type="entry name" value="P-loop containing nucleotide triphosphate hydrolases"/>
    <property type="match status" value="1"/>
</dbReference>
<dbReference type="InterPro" id="IPR003593">
    <property type="entry name" value="AAA+_ATPase"/>
</dbReference>
<dbReference type="InterPro" id="IPR011527">
    <property type="entry name" value="ABC1_TM_dom"/>
</dbReference>
<dbReference type="InterPro" id="IPR036640">
    <property type="entry name" value="ABC1_TM_sf"/>
</dbReference>
<dbReference type="InterPro" id="IPR003439">
    <property type="entry name" value="ABC_transporter-like_ATP-bd"/>
</dbReference>
<dbReference type="InterPro" id="IPR017871">
    <property type="entry name" value="ABC_transporter-like_CS"/>
</dbReference>
<dbReference type="InterPro" id="IPR027417">
    <property type="entry name" value="P-loop_NTPase"/>
</dbReference>
<dbReference type="InterPro" id="IPR039421">
    <property type="entry name" value="Type_1_exporter"/>
</dbReference>
<dbReference type="PANTHER" id="PTHR43394:SF1">
    <property type="entry name" value="ATP-BINDING CASSETTE SUB-FAMILY B MEMBER 10, MITOCHONDRIAL"/>
    <property type="match status" value="1"/>
</dbReference>
<dbReference type="PANTHER" id="PTHR43394">
    <property type="entry name" value="ATP-DEPENDENT PERMEASE MDL1, MITOCHONDRIAL"/>
    <property type="match status" value="1"/>
</dbReference>
<dbReference type="Pfam" id="PF00664">
    <property type="entry name" value="ABC_membrane"/>
    <property type="match status" value="1"/>
</dbReference>
<dbReference type="Pfam" id="PF00005">
    <property type="entry name" value="ABC_tran"/>
    <property type="match status" value="1"/>
</dbReference>
<dbReference type="SMART" id="SM00382">
    <property type="entry name" value="AAA"/>
    <property type="match status" value="1"/>
</dbReference>
<dbReference type="SUPFAM" id="SSF90123">
    <property type="entry name" value="ABC transporter transmembrane region"/>
    <property type="match status" value="1"/>
</dbReference>
<dbReference type="SUPFAM" id="SSF52540">
    <property type="entry name" value="P-loop containing nucleoside triphosphate hydrolases"/>
    <property type="match status" value="1"/>
</dbReference>
<dbReference type="PROSITE" id="PS50929">
    <property type="entry name" value="ABC_TM1F"/>
    <property type="match status" value="1"/>
</dbReference>
<dbReference type="PROSITE" id="PS00211">
    <property type="entry name" value="ABC_TRANSPORTER_1"/>
    <property type="match status" value="1"/>
</dbReference>
<dbReference type="PROSITE" id="PS50893">
    <property type="entry name" value="ABC_TRANSPORTER_2"/>
    <property type="match status" value="1"/>
</dbReference>
<evidence type="ECO:0000250" key="1"/>
<evidence type="ECO:0000255" key="2"/>
<evidence type="ECO:0000255" key="3">
    <source>
        <dbReference type="PROSITE-ProRule" id="PRU00434"/>
    </source>
</evidence>
<evidence type="ECO:0000255" key="4">
    <source>
        <dbReference type="PROSITE-ProRule" id="PRU00441"/>
    </source>
</evidence>
<evidence type="ECO:0000305" key="5"/>
<accession>Q6GFJ1</accession>
<feature type="chain" id="PRO_0000271551" description="Putative multidrug export ATP-binding/permease protein SAR1956">
    <location>
        <begin position="1"/>
        <end position="578"/>
    </location>
</feature>
<feature type="topological domain" description="Cytoplasmic" evidence="2">
    <location>
        <begin position="1"/>
        <end position="15"/>
    </location>
</feature>
<feature type="transmembrane region" description="Helical" evidence="4">
    <location>
        <begin position="16"/>
        <end position="36"/>
    </location>
</feature>
<feature type="topological domain" description="Extracellular" evidence="2">
    <location>
        <begin position="37"/>
        <end position="59"/>
    </location>
</feature>
<feature type="transmembrane region" description="Helical" evidence="4">
    <location>
        <begin position="60"/>
        <end position="80"/>
    </location>
</feature>
<feature type="topological domain" description="Cytoplasmic" evidence="2">
    <location>
        <begin position="81"/>
        <end position="138"/>
    </location>
</feature>
<feature type="transmembrane region" description="Helical" evidence="4">
    <location>
        <begin position="139"/>
        <end position="159"/>
    </location>
</feature>
<feature type="topological domain" description="Extracellular" evidence="2">
    <location>
        <begin position="160"/>
        <end position="162"/>
    </location>
</feature>
<feature type="transmembrane region" description="Helical" evidence="4">
    <location>
        <begin position="163"/>
        <end position="183"/>
    </location>
</feature>
<feature type="topological domain" description="Cytoplasmic" evidence="2">
    <location>
        <begin position="184"/>
        <end position="244"/>
    </location>
</feature>
<feature type="transmembrane region" description="Helical" evidence="4">
    <location>
        <begin position="245"/>
        <end position="263"/>
    </location>
</feature>
<feature type="topological domain" description="Extracellular" evidence="2">
    <location>
        <begin position="264"/>
        <end position="269"/>
    </location>
</feature>
<feature type="transmembrane region" description="Helical" evidence="4">
    <location>
        <begin position="270"/>
        <end position="287"/>
    </location>
</feature>
<feature type="topological domain" description="Cytoplasmic" evidence="2">
    <location>
        <begin position="288"/>
        <end position="578"/>
    </location>
</feature>
<feature type="domain" description="ABC transmembrane type-1" evidence="4">
    <location>
        <begin position="16"/>
        <end position="306"/>
    </location>
</feature>
<feature type="domain" description="ABC transporter" evidence="3">
    <location>
        <begin position="340"/>
        <end position="575"/>
    </location>
</feature>
<feature type="binding site" evidence="3">
    <location>
        <begin position="374"/>
        <end position="381"/>
    </location>
    <ligand>
        <name>ATP</name>
        <dbReference type="ChEBI" id="CHEBI:30616"/>
    </ligand>
</feature>
<sequence length="578" mass="64863">MIKRYLQFVKPYKYRIFATIIVGIIKFGIPMLIPLLIKYAIDGVINNHALTTDEKVHHLTIAIGIALFIFVIVRPPIEFIRQYLAQWTSNKILYDIRKKLYNHLQALSARFYANNQVGQVISRVINDVEQTKDFILTGLMNIWLDCITIIIALSIMFFLDVKLTLAALFIFPFYILTVYVFFGRLRKLTRERSQALAEVQGFLHERVQGISVVKSFAIEDNEAKNFDKKNTNFLTRALKHTRWNAYSFAAINTVTDIGPIIVIGVGAYLAISGSITVGTLAAFVGYLELLFGPLRRLVASFTTLTQSFASMDRVFQLIDEDYDIKNGVGAQPIEIKQGRIDIDHVSFQYNDNEAPILKDINLSIEKGETVAFVGMSGGGKSTLINLIPRFYDVTSGQILIDGHNIKDFLTGSLRNQIGLVQQDNILFSDTVKENILLGRPTATDEEVVEAAKMANAHDFIMNLPQGYDTEVGERGVKLSGGQKQRLSIARIFLNNPPILILDEATSALDLESESIIQEALDVLSKDRTTLIVAHRLSTITHADKIVVIENGHIVETGTHRELIAKQGAYEHLYSIQNL</sequence>
<reference key="1">
    <citation type="journal article" date="2004" name="Proc. Natl. Acad. Sci. U.S.A.">
        <title>Complete genomes of two clinical Staphylococcus aureus strains: evidence for the rapid evolution of virulence and drug resistance.</title>
        <authorList>
            <person name="Holden M.T.G."/>
            <person name="Feil E.J."/>
            <person name="Lindsay J.A."/>
            <person name="Peacock S.J."/>
            <person name="Day N.P.J."/>
            <person name="Enright M.C."/>
            <person name="Foster T.J."/>
            <person name="Moore C.E."/>
            <person name="Hurst L."/>
            <person name="Atkin R."/>
            <person name="Barron A."/>
            <person name="Bason N."/>
            <person name="Bentley S.D."/>
            <person name="Chillingworth C."/>
            <person name="Chillingworth T."/>
            <person name="Churcher C."/>
            <person name="Clark L."/>
            <person name="Corton C."/>
            <person name="Cronin A."/>
            <person name="Doggett J."/>
            <person name="Dowd L."/>
            <person name="Feltwell T."/>
            <person name="Hance Z."/>
            <person name="Harris B."/>
            <person name="Hauser H."/>
            <person name="Holroyd S."/>
            <person name="Jagels K."/>
            <person name="James K.D."/>
            <person name="Lennard N."/>
            <person name="Line A."/>
            <person name="Mayes R."/>
            <person name="Moule S."/>
            <person name="Mungall K."/>
            <person name="Ormond D."/>
            <person name="Quail M.A."/>
            <person name="Rabbinowitsch E."/>
            <person name="Rutherford K.M."/>
            <person name="Sanders M."/>
            <person name="Sharp S."/>
            <person name="Simmonds M."/>
            <person name="Stevens K."/>
            <person name="Whitehead S."/>
            <person name="Barrell B.G."/>
            <person name="Spratt B.G."/>
            <person name="Parkhill J."/>
        </authorList>
    </citation>
    <scope>NUCLEOTIDE SEQUENCE [LARGE SCALE GENOMIC DNA]</scope>
    <source>
        <strain>MRSA252</strain>
    </source>
</reference>
<keyword id="KW-0067">ATP-binding</keyword>
<keyword id="KW-1003">Cell membrane</keyword>
<keyword id="KW-0472">Membrane</keyword>
<keyword id="KW-0547">Nucleotide-binding</keyword>
<keyword id="KW-1278">Translocase</keyword>
<keyword id="KW-0812">Transmembrane</keyword>
<keyword id="KW-1133">Transmembrane helix</keyword>
<keyword id="KW-0813">Transport</keyword>